<organism>
    <name type="scientific">Thermococcus kodakarensis (strain ATCC BAA-918 / JCM 12380 / KOD1)</name>
    <name type="common">Pyrococcus kodakaraensis (strain KOD1)</name>
    <dbReference type="NCBI Taxonomy" id="69014"/>
    <lineage>
        <taxon>Archaea</taxon>
        <taxon>Methanobacteriati</taxon>
        <taxon>Methanobacteriota</taxon>
        <taxon>Thermococci</taxon>
        <taxon>Thermococcales</taxon>
        <taxon>Thermococcaceae</taxon>
        <taxon>Thermococcus</taxon>
    </lineage>
</organism>
<accession>Q5JIE3</accession>
<comment type="function">
    <text evidence="1">Molecular chaperone capable of stabilizing a range of proteins. Seems to fulfill an ATP-independent, HSP70-like function in archaeal de novo protein folding.</text>
</comment>
<comment type="subunit">
    <text evidence="1">Heterohexamer of two alpha and four beta subunits.</text>
</comment>
<comment type="subcellular location">
    <subcellularLocation>
        <location evidence="1">Cytoplasm</location>
    </subcellularLocation>
</comment>
<comment type="similarity">
    <text evidence="2">Belongs to the prefoldin subunit alpha family.</text>
</comment>
<reference key="1">
    <citation type="journal article" date="2005" name="Genome Res.">
        <title>Complete genome sequence of the hyperthermophilic archaeon Thermococcus kodakaraensis KOD1 and comparison with Pyrococcus genomes.</title>
        <authorList>
            <person name="Fukui T."/>
            <person name="Atomi H."/>
            <person name="Kanai T."/>
            <person name="Matsumi R."/>
            <person name="Fujiwara S."/>
            <person name="Imanaka T."/>
        </authorList>
    </citation>
    <scope>NUCLEOTIDE SEQUENCE [LARGE SCALE GENOMIC DNA]</scope>
    <source>
        <strain>ATCC BAA-918 / JCM 12380 / KOD1</strain>
    </source>
</reference>
<proteinExistence type="inferred from homology"/>
<name>PFDA1_THEKO</name>
<evidence type="ECO:0000255" key="1">
    <source>
        <dbReference type="HAMAP-Rule" id="MF_00308"/>
    </source>
</evidence>
<evidence type="ECO:0000305" key="2"/>
<feature type="chain" id="PRO_0000153685" description="Prefoldin subunit alpha 1">
    <location>
        <begin position="1"/>
        <end position="146"/>
    </location>
</feature>
<gene>
    <name evidence="1" type="primary">pfdA1</name>
    <name type="ordered locus">TK1005</name>
</gene>
<dbReference type="EMBL" id="AP006878">
    <property type="protein sequence ID" value="BAD85194.1"/>
    <property type="molecule type" value="Genomic_DNA"/>
</dbReference>
<dbReference type="RefSeq" id="WP_011249956.1">
    <property type="nucleotide sequence ID" value="NC_006624.1"/>
</dbReference>
<dbReference type="SMR" id="Q5JIE3"/>
<dbReference type="FunCoup" id="Q5JIE3">
    <property type="interactions" value="3"/>
</dbReference>
<dbReference type="STRING" id="69014.TK1005"/>
<dbReference type="EnsemblBacteria" id="BAD85194">
    <property type="protein sequence ID" value="BAD85194"/>
    <property type="gene ID" value="TK1005"/>
</dbReference>
<dbReference type="GeneID" id="78447518"/>
<dbReference type="KEGG" id="tko:TK1005"/>
<dbReference type="PATRIC" id="fig|69014.16.peg.983"/>
<dbReference type="eggNOG" id="arCOG01341">
    <property type="taxonomic scope" value="Archaea"/>
</dbReference>
<dbReference type="HOGENOM" id="CLU_091867_1_3_2"/>
<dbReference type="InParanoid" id="Q5JIE3"/>
<dbReference type="OrthoDB" id="10045at2157"/>
<dbReference type="PhylomeDB" id="Q5JIE3"/>
<dbReference type="Proteomes" id="UP000000536">
    <property type="component" value="Chromosome"/>
</dbReference>
<dbReference type="GO" id="GO:0005737">
    <property type="term" value="C:cytoplasm"/>
    <property type="evidence" value="ECO:0000318"/>
    <property type="project" value="GO_Central"/>
</dbReference>
<dbReference type="GO" id="GO:0016272">
    <property type="term" value="C:prefoldin complex"/>
    <property type="evidence" value="ECO:0000318"/>
    <property type="project" value="GO_Central"/>
</dbReference>
<dbReference type="GO" id="GO:0051082">
    <property type="term" value="F:unfolded protein binding"/>
    <property type="evidence" value="ECO:0007669"/>
    <property type="project" value="UniProtKB-UniRule"/>
</dbReference>
<dbReference type="GO" id="GO:0006457">
    <property type="term" value="P:protein folding"/>
    <property type="evidence" value="ECO:0007669"/>
    <property type="project" value="UniProtKB-UniRule"/>
</dbReference>
<dbReference type="CDD" id="cd23160">
    <property type="entry name" value="Prefoldin_alpha_GimC"/>
    <property type="match status" value="1"/>
</dbReference>
<dbReference type="FunFam" id="1.10.287.370:FF:000027">
    <property type="entry name" value="Prefoldin subunit alpha 1"/>
    <property type="match status" value="1"/>
</dbReference>
<dbReference type="Gene3D" id="1.10.287.370">
    <property type="match status" value="1"/>
</dbReference>
<dbReference type="HAMAP" id="MF_00308">
    <property type="entry name" value="PfdA"/>
    <property type="match status" value="1"/>
</dbReference>
<dbReference type="InterPro" id="IPR011599">
    <property type="entry name" value="PFD_alpha_archaea"/>
</dbReference>
<dbReference type="InterPro" id="IPR009053">
    <property type="entry name" value="Prefoldin"/>
</dbReference>
<dbReference type="InterPro" id="IPR004127">
    <property type="entry name" value="Prefoldin_subunit_alpha"/>
</dbReference>
<dbReference type="NCBIfam" id="TIGR00293">
    <property type="entry name" value="prefoldin subunit alpha"/>
    <property type="match status" value="1"/>
</dbReference>
<dbReference type="PANTHER" id="PTHR12674">
    <property type="entry name" value="PREFOLDIN SUBUNIT 5"/>
    <property type="match status" value="1"/>
</dbReference>
<dbReference type="PANTHER" id="PTHR12674:SF2">
    <property type="entry name" value="PREFOLDIN SUBUNIT 5"/>
    <property type="match status" value="1"/>
</dbReference>
<dbReference type="Pfam" id="PF02996">
    <property type="entry name" value="Prefoldin"/>
    <property type="match status" value="1"/>
</dbReference>
<dbReference type="SUPFAM" id="SSF46579">
    <property type="entry name" value="Prefoldin"/>
    <property type="match status" value="1"/>
</dbReference>
<sequence>MAEDTKKLEELAYQYQLLQAQAQLLAQNLELLTLGRNEFQAVKETLEGLKNEEGEFEILVPIGAGSFLKGKIVDAKNAIVSVGAGYAVQKSLDDSIEYLEKRIKEYEEAIAKTQEALKKLEAQLGELARQAQEIQQKQAMGFSVKK</sequence>
<protein>
    <recommendedName>
        <fullName evidence="1">Prefoldin subunit alpha 1</fullName>
    </recommendedName>
    <alternativeName>
        <fullName evidence="1">GimC subunit alpha 1</fullName>
    </alternativeName>
</protein>
<keyword id="KW-0143">Chaperone</keyword>
<keyword id="KW-0963">Cytoplasm</keyword>
<keyword id="KW-1185">Reference proteome</keyword>